<protein>
    <recommendedName>
        <fullName>GDNF family receptor alpha-2</fullName>
        <shortName>GDNF receptor alpha-2</shortName>
        <shortName>GDNFR-alpha-2</shortName>
        <shortName>GFR-alpha-2</shortName>
    </recommendedName>
    <alternativeName>
        <fullName>GDNF receptor beta</fullName>
        <shortName>GDNFR-beta</shortName>
    </alternativeName>
    <alternativeName>
        <fullName>Neurturin receptor alpha</fullName>
        <shortName>NRTNR-alpha</shortName>
        <shortName>NTNR-alpha</shortName>
    </alternativeName>
</protein>
<gene>
    <name type="primary">GFRA2</name>
    <name type="synonym">GDNFRB</name>
</gene>
<keyword id="KW-1003">Cell membrane</keyword>
<keyword id="KW-1015">Disulfide bond</keyword>
<keyword id="KW-0325">Glycoprotein</keyword>
<keyword id="KW-0336">GPI-anchor</keyword>
<keyword id="KW-0449">Lipoprotein</keyword>
<keyword id="KW-0472">Membrane</keyword>
<keyword id="KW-0675">Receptor</keyword>
<keyword id="KW-1185">Reference proteome</keyword>
<keyword id="KW-0732">Signal</keyword>
<accession>O13157</accession>
<evidence type="ECO:0000250" key="1">
    <source>
        <dbReference type="UniProtKB" id="O00451"/>
    </source>
</evidence>
<evidence type="ECO:0000250" key="2">
    <source>
        <dbReference type="UniProtKB" id="O08842"/>
    </source>
</evidence>
<evidence type="ECO:0000255" key="3"/>
<evidence type="ECO:0000269" key="4">
    <source>
    </source>
</evidence>
<evidence type="ECO:0000305" key="5"/>
<feature type="signal peptide" evidence="3">
    <location>
        <begin position="1"/>
        <end position="21"/>
    </location>
</feature>
<feature type="chain" id="PRO_0000010783" description="GDNF family receptor alpha-2">
    <location>
        <begin position="22"/>
        <end position="445"/>
    </location>
</feature>
<feature type="propeptide" id="PRO_0000010784" description="Removed in mature form" evidence="3">
    <location>
        <begin position="446"/>
        <end position="465"/>
    </location>
</feature>
<feature type="lipid moiety-binding region" description="GPI-anchor amidated serine" evidence="3">
    <location>
        <position position="445"/>
    </location>
</feature>
<feature type="glycosylation site" description="N-linked (GlcNAc...) asparagine" evidence="3">
    <location>
        <position position="355"/>
    </location>
</feature>
<feature type="glycosylation site" description="N-linked (GlcNAc...) asparagine" evidence="3">
    <location>
        <position position="387"/>
    </location>
</feature>
<feature type="glycosylation site" description="N-linked (GlcNAc...) asparagine" evidence="3">
    <location>
        <position position="412"/>
    </location>
</feature>
<feature type="disulfide bond" evidence="1">
    <location>
        <begin position="40"/>
        <end position="93"/>
    </location>
</feature>
<feature type="disulfide bond" evidence="1">
    <location>
        <begin position="47"/>
        <end position="53"/>
    </location>
</feature>
<feature type="disulfide bond" evidence="1">
    <location>
        <begin position="63"/>
        <end position="78"/>
    </location>
</feature>
<feature type="disulfide bond" evidence="1">
    <location>
        <begin position="95"/>
        <end position="105"/>
    </location>
</feature>
<feature type="disulfide bond" evidence="1">
    <location>
        <begin position="159"/>
        <end position="220"/>
    </location>
</feature>
<feature type="disulfide bond" evidence="1">
    <location>
        <begin position="166"/>
        <end position="172"/>
    </location>
</feature>
<feature type="disulfide bond" evidence="1">
    <location>
        <begin position="183"/>
        <end position="198"/>
    </location>
</feature>
<feature type="disulfide bond" evidence="1">
    <location>
        <begin position="193"/>
        <end position="239"/>
    </location>
</feature>
<feature type="disulfide bond" evidence="1">
    <location>
        <begin position="222"/>
        <end position="227"/>
    </location>
</feature>
<feature type="disulfide bond" evidence="1">
    <location>
        <begin position="249"/>
        <end position="321"/>
    </location>
</feature>
<feature type="disulfide bond" evidence="1">
    <location>
        <begin position="256"/>
        <end position="262"/>
    </location>
</feature>
<feature type="disulfide bond" evidence="1">
    <location>
        <begin position="273"/>
        <end position="291"/>
    </location>
</feature>
<feature type="disulfide bond" evidence="1">
    <location>
        <begin position="283"/>
        <end position="345"/>
    </location>
</feature>
<feature type="disulfide bond" evidence="1">
    <location>
        <begin position="323"/>
        <end position="333"/>
    </location>
</feature>
<name>GFRA2_CHICK</name>
<proteinExistence type="evidence at protein level"/>
<organism>
    <name type="scientific">Gallus gallus</name>
    <name type="common">Chicken</name>
    <dbReference type="NCBI Taxonomy" id="9031"/>
    <lineage>
        <taxon>Eukaryota</taxon>
        <taxon>Metazoa</taxon>
        <taxon>Chordata</taxon>
        <taxon>Craniata</taxon>
        <taxon>Vertebrata</taxon>
        <taxon>Euteleostomi</taxon>
        <taxon>Archelosauria</taxon>
        <taxon>Archosauria</taxon>
        <taxon>Dinosauria</taxon>
        <taxon>Saurischia</taxon>
        <taxon>Theropoda</taxon>
        <taxon>Coelurosauria</taxon>
        <taxon>Aves</taxon>
        <taxon>Neognathae</taxon>
        <taxon>Galloanserae</taxon>
        <taxon>Galliformes</taxon>
        <taxon>Phasianidae</taxon>
        <taxon>Phasianinae</taxon>
        <taxon>Gallus</taxon>
    </lineage>
</organism>
<dbReference type="EMBL" id="U90542">
    <property type="protein sequence ID" value="AAB61571.1"/>
    <property type="molecule type" value="mRNA"/>
</dbReference>
<dbReference type="RefSeq" id="NP_990432.1">
    <property type="nucleotide sequence ID" value="NM_205101.1"/>
</dbReference>
<dbReference type="SMR" id="O13157"/>
<dbReference type="FunCoup" id="O13157">
    <property type="interactions" value="213"/>
</dbReference>
<dbReference type="STRING" id="9031.ENSGALP00000068025"/>
<dbReference type="GlyCosmos" id="O13157">
    <property type="glycosylation" value="3 sites, No reported glycans"/>
</dbReference>
<dbReference type="GlyGen" id="O13157">
    <property type="glycosylation" value="3 sites"/>
</dbReference>
<dbReference type="PaxDb" id="9031-ENSGALP00000002763"/>
<dbReference type="GeneID" id="395993"/>
<dbReference type="KEGG" id="gga:395993"/>
<dbReference type="CTD" id="2675"/>
<dbReference type="VEuPathDB" id="HostDB:geneid_395993"/>
<dbReference type="eggNOG" id="ENOG502QS3P">
    <property type="taxonomic scope" value="Eukaryota"/>
</dbReference>
<dbReference type="InParanoid" id="O13157"/>
<dbReference type="OMA" id="LCYSEAQ"/>
<dbReference type="OrthoDB" id="9435188at2759"/>
<dbReference type="PhylomeDB" id="O13157"/>
<dbReference type="PRO" id="PR:O13157"/>
<dbReference type="Proteomes" id="UP000000539">
    <property type="component" value="Unassembled WGS sequence"/>
</dbReference>
<dbReference type="GO" id="GO:0009897">
    <property type="term" value="C:external side of plasma membrane"/>
    <property type="evidence" value="ECO:0000318"/>
    <property type="project" value="GO_Central"/>
</dbReference>
<dbReference type="GO" id="GO:0043235">
    <property type="term" value="C:receptor complex"/>
    <property type="evidence" value="ECO:0000318"/>
    <property type="project" value="GO_Central"/>
</dbReference>
<dbReference type="GO" id="GO:0016167">
    <property type="term" value="F:glial cell-derived neurotrophic factor receptor activity"/>
    <property type="evidence" value="ECO:0000250"/>
    <property type="project" value="UniProtKB"/>
</dbReference>
<dbReference type="GO" id="GO:0035860">
    <property type="term" value="P:glial cell-derived neurotrophic factor receptor signaling pathway"/>
    <property type="evidence" value="ECO:0000250"/>
    <property type="project" value="UniProtKB"/>
</dbReference>
<dbReference type="GO" id="GO:0007399">
    <property type="term" value="P:nervous system development"/>
    <property type="evidence" value="ECO:0000318"/>
    <property type="project" value="GO_Central"/>
</dbReference>
<dbReference type="FunFam" id="1.10.220.110:FF:000001">
    <property type="entry name" value="GDNF family receptor alpha"/>
    <property type="match status" value="1"/>
</dbReference>
<dbReference type="Gene3D" id="1.10.220.110">
    <property type="entry name" value="GDNF binding domain"/>
    <property type="match status" value="1"/>
</dbReference>
<dbReference type="InterPro" id="IPR016017">
    <property type="entry name" value="GDNF/GAS1"/>
</dbReference>
<dbReference type="InterPro" id="IPR037193">
    <property type="entry name" value="GDNF_alpha"/>
</dbReference>
<dbReference type="InterPro" id="IPR003438">
    <property type="entry name" value="GDNF_rcpt"/>
</dbReference>
<dbReference type="InterPro" id="IPR003504">
    <property type="entry name" value="GDNF_rcpt_a2"/>
</dbReference>
<dbReference type="InterPro" id="IPR017372">
    <property type="entry name" value="Glial_neurotroph_fac_rcpt_a1/2"/>
</dbReference>
<dbReference type="PANTHER" id="PTHR10269:SF4">
    <property type="entry name" value="GDNF FAMILY RECEPTOR ALPHA-2"/>
    <property type="match status" value="1"/>
</dbReference>
<dbReference type="PANTHER" id="PTHR10269">
    <property type="entry name" value="GDNF RECEPTOR ALPHA"/>
    <property type="match status" value="1"/>
</dbReference>
<dbReference type="Pfam" id="PF02351">
    <property type="entry name" value="GDNF"/>
    <property type="match status" value="3"/>
</dbReference>
<dbReference type="PIRSF" id="PIRSF038071">
    <property type="entry name" value="GDNF_family_receptor_alpha"/>
    <property type="match status" value="1"/>
</dbReference>
<dbReference type="PRINTS" id="PR01318">
    <property type="entry name" value="GDNFRALPHA2"/>
</dbReference>
<dbReference type="PRINTS" id="PR01316">
    <property type="entry name" value="GDNFRECEPTOR"/>
</dbReference>
<dbReference type="SMART" id="SM00907">
    <property type="entry name" value="GDNF"/>
    <property type="match status" value="3"/>
</dbReference>
<dbReference type="SUPFAM" id="SSF110035">
    <property type="entry name" value="GDNF receptor-like"/>
    <property type="match status" value="1"/>
</dbReference>
<sequence>MILANAFCIVLFVDETLRSLAAPPSPPGQDLQGWRVPVDCIRANKLCAAEGSCSSRYRTLRQCLAGRDRNTMLANKECQAALEVLQESPLYDCRCKRGMRKEIQCLQVYWSIHLGLAEGEEFYEASPYEPITSRLSDIFRLASIFSGMDPATNSKSNHCLDAAKACNLNDNCKRLRSGYISTCSKEISATEHCSRRKCHKALRQFFDNVPSEYTYRLLFCSCKDQACAEPRRQTIVPFCSYEDKEKPNCLDLRNVCRADHLCRSRLADFHANCQASFQSLTSCPGDNYQACLGSYTGLIGFDMTPNYVDASTTSITISPWCSCKGSGNLEEECEKFLRDFTENPCLRNAIQAFGNGTDVNLSPKNPSPPITMLPKVEKSPALPDDINDSNTMYDTSIITTCTSIQEHGQKLNKSKEQSLCYSETQLTTDTMPDQKTFVDQKAAGSRHRAARILPAVPIVLLKLLL</sequence>
<comment type="function">
    <text evidence="4">Receptor for neurturin (NRTN), a growth factor that supports the survival of sympathetic neurons (PubMed:9192899). NRTN-binding leads to autophosphorylation and activation of the RET receptor (PubMed:9192899).</text>
</comment>
<comment type="subunit">
    <text evidence="4">Interacts with NRTN ligand and RET: forms a 2:2:2 ternary complex composed of NRTN ligand, GFRA2 and RET receptor.</text>
</comment>
<comment type="subcellular location">
    <subcellularLocation>
        <location evidence="2">Cell membrane</location>
        <topology evidence="2">Lipid-anchor</topology>
        <topology evidence="2">GPI-anchor</topology>
    </subcellularLocation>
</comment>
<comment type="similarity">
    <text evidence="5">Belongs to the GDNFR family.</text>
</comment>
<reference key="1">
    <citation type="journal article" date="1997" name="Nature">
        <title>Neurturin responsiveness requires a GPI-linked receptor and the Ret receptor tyrosine kinase.</title>
        <authorList>
            <person name="Buj-Bello A."/>
            <person name="Adu J."/>
            <person name="Pinon L.G.P."/>
            <person name="Horton A."/>
            <person name="Thompson J."/>
            <person name="Rosenthal A."/>
            <person name="Chinchetru M."/>
            <person name="Buchman V.L."/>
            <person name="Davies A.M."/>
        </authorList>
    </citation>
    <scope>NUCLEOTIDE SEQUENCE [MRNA]</scope>
    <scope>FUNCTION</scope>
    <scope>SUBUNIT</scope>
    <source>
        <tissue>Brain</tissue>
    </source>
</reference>